<sequence length="293" mass="32231">MSIFKGSAVALITPFTQDGVNFDELKKLLEWHIKNKTDAIVICGTTGEASTMSLNERKETIKYTVETVNKRIPVIAGTGSNNTKSSVEMSIWAEKIGVDGVLVITPYYNKTTQKGLIEHFKSINDNINIPIILYNVPGRTGLNILPETLYAMRDLKNICAIKEASGNISQIAKIKALCRDRFDIYSGNDDQIVPILSLGGSGVISVLANIIPQTVHDMCFSYFQGKTTDALNLQLDTLSLTNSLFIETNPIPIKTAMNLLNFNAGPLRLPLCSMDEKNLNTLKTDLKGYGLIK</sequence>
<keyword id="KW-0028">Amino-acid biosynthesis</keyword>
<keyword id="KW-0963">Cytoplasm</keyword>
<keyword id="KW-0220">Diaminopimelate biosynthesis</keyword>
<keyword id="KW-0456">Lyase</keyword>
<keyword id="KW-0457">Lysine biosynthesis</keyword>
<keyword id="KW-1185">Reference proteome</keyword>
<keyword id="KW-0704">Schiff base</keyword>
<name>DAPA1_CLOAB</name>
<organism>
    <name type="scientific">Clostridium acetobutylicum (strain ATCC 824 / DSM 792 / JCM 1419 / IAM 19013 / LMG 5710 / NBRC 13948 / NRRL B-527 / VKM B-1787 / 2291 / W)</name>
    <dbReference type="NCBI Taxonomy" id="272562"/>
    <lineage>
        <taxon>Bacteria</taxon>
        <taxon>Bacillati</taxon>
        <taxon>Bacillota</taxon>
        <taxon>Clostridia</taxon>
        <taxon>Eubacteriales</taxon>
        <taxon>Clostridiaceae</taxon>
        <taxon>Clostridium</taxon>
    </lineage>
</organism>
<protein>
    <recommendedName>
        <fullName evidence="1">4-hydroxy-tetrahydrodipicolinate synthase 1</fullName>
        <shortName evidence="1">HTPA synthase 1</shortName>
        <ecNumber evidence="1">4.3.3.7</ecNumber>
    </recommendedName>
</protein>
<dbReference type="EC" id="4.3.3.7" evidence="1"/>
<dbReference type="EMBL" id="AE001437">
    <property type="protein sequence ID" value="AAK80333.1"/>
    <property type="molecule type" value="Genomic_DNA"/>
</dbReference>
<dbReference type="PIR" id="B97193">
    <property type="entry name" value="B97193"/>
</dbReference>
<dbReference type="RefSeq" id="NP_348993.1">
    <property type="nucleotide sequence ID" value="NC_003030.1"/>
</dbReference>
<dbReference type="SMR" id="Q97GI9"/>
<dbReference type="STRING" id="272562.CA_C2378"/>
<dbReference type="KEGG" id="cac:CA_C2378"/>
<dbReference type="PATRIC" id="fig|272562.8.peg.2575"/>
<dbReference type="eggNOG" id="COG0329">
    <property type="taxonomic scope" value="Bacteria"/>
</dbReference>
<dbReference type="HOGENOM" id="CLU_049343_7_1_9"/>
<dbReference type="OrthoDB" id="9782828at2"/>
<dbReference type="UniPathway" id="UPA00034">
    <property type="reaction ID" value="UER00017"/>
</dbReference>
<dbReference type="Proteomes" id="UP000000814">
    <property type="component" value="Chromosome"/>
</dbReference>
<dbReference type="GO" id="GO:0005829">
    <property type="term" value="C:cytosol"/>
    <property type="evidence" value="ECO:0007669"/>
    <property type="project" value="TreeGrafter"/>
</dbReference>
<dbReference type="GO" id="GO:0008840">
    <property type="term" value="F:4-hydroxy-tetrahydrodipicolinate synthase activity"/>
    <property type="evidence" value="ECO:0007669"/>
    <property type="project" value="UniProtKB-UniRule"/>
</dbReference>
<dbReference type="GO" id="GO:0019877">
    <property type="term" value="P:diaminopimelate biosynthetic process"/>
    <property type="evidence" value="ECO:0007669"/>
    <property type="project" value="UniProtKB-UniRule"/>
</dbReference>
<dbReference type="GO" id="GO:0009089">
    <property type="term" value="P:lysine biosynthetic process via diaminopimelate"/>
    <property type="evidence" value="ECO:0007669"/>
    <property type="project" value="UniProtKB-UniRule"/>
</dbReference>
<dbReference type="CDD" id="cd00950">
    <property type="entry name" value="DHDPS"/>
    <property type="match status" value="1"/>
</dbReference>
<dbReference type="Gene3D" id="3.20.20.70">
    <property type="entry name" value="Aldolase class I"/>
    <property type="match status" value="1"/>
</dbReference>
<dbReference type="HAMAP" id="MF_00418">
    <property type="entry name" value="DapA"/>
    <property type="match status" value="1"/>
</dbReference>
<dbReference type="InterPro" id="IPR013785">
    <property type="entry name" value="Aldolase_TIM"/>
</dbReference>
<dbReference type="InterPro" id="IPR005263">
    <property type="entry name" value="DapA"/>
</dbReference>
<dbReference type="InterPro" id="IPR002220">
    <property type="entry name" value="DapA-like"/>
</dbReference>
<dbReference type="InterPro" id="IPR020625">
    <property type="entry name" value="Schiff_base-form_aldolases_AS"/>
</dbReference>
<dbReference type="InterPro" id="IPR020624">
    <property type="entry name" value="Schiff_base-form_aldolases_CS"/>
</dbReference>
<dbReference type="NCBIfam" id="TIGR00674">
    <property type="entry name" value="dapA"/>
    <property type="match status" value="1"/>
</dbReference>
<dbReference type="PANTHER" id="PTHR12128:SF66">
    <property type="entry name" value="4-HYDROXY-2-OXOGLUTARATE ALDOLASE, MITOCHONDRIAL"/>
    <property type="match status" value="1"/>
</dbReference>
<dbReference type="PANTHER" id="PTHR12128">
    <property type="entry name" value="DIHYDRODIPICOLINATE SYNTHASE"/>
    <property type="match status" value="1"/>
</dbReference>
<dbReference type="Pfam" id="PF00701">
    <property type="entry name" value="DHDPS"/>
    <property type="match status" value="1"/>
</dbReference>
<dbReference type="PIRSF" id="PIRSF001365">
    <property type="entry name" value="DHDPS"/>
    <property type="match status" value="1"/>
</dbReference>
<dbReference type="PRINTS" id="PR00146">
    <property type="entry name" value="DHPICSNTHASE"/>
</dbReference>
<dbReference type="SMART" id="SM01130">
    <property type="entry name" value="DHDPS"/>
    <property type="match status" value="1"/>
</dbReference>
<dbReference type="SUPFAM" id="SSF51569">
    <property type="entry name" value="Aldolase"/>
    <property type="match status" value="1"/>
</dbReference>
<dbReference type="PROSITE" id="PS00665">
    <property type="entry name" value="DHDPS_1"/>
    <property type="match status" value="1"/>
</dbReference>
<dbReference type="PROSITE" id="PS00666">
    <property type="entry name" value="DHDPS_2"/>
    <property type="match status" value="1"/>
</dbReference>
<proteinExistence type="inferred from homology"/>
<reference key="1">
    <citation type="journal article" date="2001" name="J. Bacteriol.">
        <title>Genome sequence and comparative analysis of the solvent-producing bacterium Clostridium acetobutylicum.</title>
        <authorList>
            <person name="Noelling J."/>
            <person name="Breton G."/>
            <person name="Omelchenko M.V."/>
            <person name="Makarova K.S."/>
            <person name="Zeng Q."/>
            <person name="Gibson R."/>
            <person name="Lee H.M."/>
            <person name="Dubois J."/>
            <person name="Qiu D."/>
            <person name="Hitti J."/>
            <person name="Wolf Y.I."/>
            <person name="Tatusov R.L."/>
            <person name="Sabathe F."/>
            <person name="Doucette-Stamm L.A."/>
            <person name="Soucaille P."/>
            <person name="Daly M.J."/>
            <person name="Bennett G.N."/>
            <person name="Koonin E.V."/>
            <person name="Smith D.R."/>
        </authorList>
    </citation>
    <scope>NUCLEOTIDE SEQUENCE [LARGE SCALE GENOMIC DNA]</scope>
    <source>
        <strain>ATCC 824 / DSM 792 / JCM 1419 / IAM 19013 / LMG 5710 / NBRC 13948 / NRRL B-527 / VKM B-1787 / 2291 / W</strain>
    </source>
</reference>
<gene>
    <name evidence="1" type="primary">dapA1</name>
    <name type="ordered locus">CA_C2378</name>
</gene>
<comment type="function">
    <text evidence="1">Catalyzes the condensation of (S)-aspartate-beta-semialdehyde [(S)-ASA] and pyruvate to 4-hydroxy-tetrahydrodipicolinate (HTPA).</text>
</comment>
<comment type="catalytic activity">
    <reaction evidence="1">
        <text>L-aspartate 4-semialdehyde + pyruvate = (2S,4S)-4-hydroxy-2,3,4,5-tetrahydrodipicolinate + H2O + H(+)</text>
        <dbReference type="Rhea" id="RHEA:34171"/>
        <dbReference type="ChEBI" id="CHEBI:15361"/>
        <dbReference type="ChEBI" id="CHEBI:15377"/>
        <dbReference type="ChEBI" id="CHEBI:15378"/>
        <dbReference type="ChEBI" id="CHEBI:67139"/>
        <dbReference type="ChEBI" id="CHEBI:537519"/>
        <dbReference type="EC" id="4.3.3.7"/>
    </reaction>
</comment>
<comment type="pathway">
    <text evidence="1">Amino-acid biosynthesis; L-lysine biosynthesis via DAP pathway; (S)-tetrahydrodipicolinate from L-aspartate: step 3/4.</text>
</comment>
<comment type="subunit">
    <text evidence="1">Homotetramer; dimer of dimers.</text>
</comment>
<comment type="subcellular location">
    <subcellularLocation>
        <location evidence="1">Cytoplasm</location>
    </subcellularLocation>
</comment>
<comment type="similarity">
    <text evidence="1">Belongs to the DapA family.</text>
</comment>
<comment type="caution">
    <text evidence="2">Was originally thought to be a dihydrodipicolinate synthase (DHDPS), catalyzing the condensation of (S)-aspartate-beta-semialdehyde [(S)-ASA] and pyruvate to dihydrodipicolinate (DHDP). However, it was shown in E.coli that the product of the enzymatic reaction is not dihydrodipicolinate but in fact (4S)-4-hydroxy-2,3,4,5-tetrahydro-(2S)-dipicolinic acid (HTPA), and that the consecutive dehydration reaction leading to DHDP is not spontaneous but catalyzed by DapB.</text>
</comment>
<evidence type="ECO:0000255" key="1">
    <source>
        <dbReference type="HAMAP-Rule" id="MF_00418"/>
    </source>
</evidence>
<evidence type="ECO:0000305" key="2"/>
<accession>Q97GI9</accession>
<feature type="chain" id="PRO_0000103103" description="4-hydroxy-tetrahydrodipicolinate synthase 1">
    <location>
        <begin position="1"/>
        <end position="293"/>
    </location>
</feature>
<feature type="active site" description="Proton donor/acceptor" evidence="1">
    <location>
        <position position="134"/>
    </location>
</feature>
<feature type="active site" description="Schiff-base intermediate with substrate" evidence="1">
    <location>
        <position position="162"/>
    </location>
</feature>
<feature type="binding site" evidence="1">
    <location>
        <position position="46"/>
    </location>
    <ligand>
        <name>pyruvate</name>
        <dbReference type="ChEBI" id="CHEBI:15361"/>
    </ligand>
</feature>
<feature type="binding site" evidence="1">
    <location>
        <position position="204"/>
    </location>
    <ligand>
        <name>pyruvate</name>
        <dbReference type="ChEBI" id="CHEBI:15361"/>
    </ligand>
</feature>
<feature type="site" description="Part of a proton relay during catalysis" evidence="1">
    <location>
        <position position="45"/>
    </location>
</feature>
<feature type="site" description="Part of a proton relay during catalysis" evidence="1">
    <location>
        <position position="108"/>
    </location>
</feature>